<reference key="1">
    <citation type="journal article" date="2001" name="Science">
        <title>Complete genome sequence of a virulent isolate of Streptococcus pneumoniae.</title>
        <authorList>
            <person name="Tettelin H."/>
            <person name="Nelson K.E."/>
            <person name="Paulsen I.T."/>
            <person name="Eisen J.A."/>
            <person name="Read T.D."/>
            <person name="Peterson S.N."/>
            <person name="Heidelberg J.F."/>
            <person name="DeBoy R.T."/>
            <person name="Haft D.H."/>
            <person name="Dodson R.J."/>
            <person name="Durkin A.S."/>
            <person name="Gwinn M.L."/>
            <person name="Kolonay J.F."/>
            <person name="Nelson W.C."/>
            <person name="Peterson J.D."/>
            <person name="Umayam L.A."/>
            <person name="White O."/>
            <person name="Salzberg S.L."/>
            <person name="Lewis M.R."/>
            <person name="Radune D."/>
            <person name="Holtzapple E.K."/>
            <person name="Khouri H.M."/>
            <person name="Wolf A.M."/>
            <person name="Utterback T.R."/>
            <person name="Hansen C.L."/>
            <person name="McDonald L.A."/>
            <person name="Feldblyum T.V."/>
            <person name="Angiuoli S.V."/>
            <person name="Dickinson T."/>
            <person name="Hickey E.K."/>
            <person name="Holt I.E."/>
            <person name="Loftus B.J."/>
            <person name="Yang F."/>
            <person name="Smith H.O."/>
            <person name="Venter J.C."/>
            <person name="Dougherty B.A."/>
            <person name="Morrison D.A."/>
            <person name="Hollingshead S.K."/>
            <person name="Fraser C.M."/>
        </authorList>
    </citation>
    <scope>NUCLEOTIDE SEQUENCE [LARGE SCALE GENOMIC DNA]</scope>
    <source>
        <strain>ATCC BAA-334 / TIGR4</strain>
    </source>
</reference>
<gene>
    <name type="ordered locus">SP_1800</name>
</gene>
<name>Y1800_STRPN</name>
<keyword id="KW-0002">3D-structure</keyword>
<keyword id="KW-1185">Reference proteome</keyword>
<keyword id="KW-0804">Transcription</keyword>
<keyword id="KW-0805">Transcription regulation</keyword>
<sequence length="493" mass="58755">MRDLLSKKSHRQLELLELLFEHKRWFHRSELAELLNCTERAVKDDLSHVKSAFPDLIFHSSTNGIRIINTDDSDIEMVYHHFFKHSTHFSILEFIFFNEGCQAESICKEFYISSSSLYRIISQINKVIKRQFQFEVSLTPVQIIGNERDIRYFFAQYFSEKYYFLEWPFENFSSEPLSQLLELVYKETSFPMNLSTHRMLKLLLVTNLYRIKFGHFMEVDKDSFNDQSLDFLMQAEGIEGVAQSFESEYNISLDEEVVCQLFVSYFQKMFFIDESLFMKCVKKDSYVEKSYHLLSDFIDQISVKYQIEMENKDNLIWHLHNTAHLYRQELFTEFILFDQKGNTIRNFQNIFPKFVSDIKKELSHYLETLEVCSSSMMVNHLSYTFITHTKHLVINLLQNQPKLKVLVMSNFDQYHAKFVAETLSYYCSNNFELEVWTELELSKESLEDSPYDIIISNFIIPPIENKRLIYSNNINTVSLIYLLNAMMFIRLDE</sequence>
<dbReference type="EMBL" id="AE005672">
    <property type="protein sequence ID" value="AAK75873.1"/>
    <property type="molecule type" value="Genomic_DNA"/>
</dbReference>
<dbReference type="PIR" id="H95209">
    <property type="entry name" value="H95209"/>
</dbReference>
<dbReference type="PDB" id="5WAY">
    <property type="method" value="X-ray"/>
    <property type="resolution" value="2.09 A"/>
    <property type="chains" value="A/B=1-493"/>
</dbReference>
<dbReference type="PDBsum" id="5WAY"/>
<dbReference type="SMR" id="Q97P44"/>
<dbReference type="PaxDb" id="170187-SP_1800"/>
<dbReference type="DNASU" id="931019"/>
<dbReference type="EnsemblBacteria" id="AAK75873">
    <property type="protein sequence ID" value="AAK75873"/>
    <property type="gene ID" value="SP_1800"/>
</dbReference>
<dbReference type="KEGG" id="spn:SP_1800"/>
<dbReference type="eggNOG" id="COG3711">
    <property type="taxonomic scope" value="Bacteria"/>
</dbReference>
<dbReference type="BioCyc" id="SPNE170187:G1FZB-1831-MONOMER"/>
<dbReference type="Proteomes" id="UP000000585">
    <property type="component" value="Chromosome"/>
</dbReference>
<dbReference type="Gene3D" id="1.10.10.10">
    <property type="entry name" value="Winged helix-like DNA-binding domain superfamily/Winged helix DNA-binding domain"/>
    <property type="match status" value="2"/>
</dbReference>
<dbReference type="InterPro" id="IPR050661">
    <property type="entry name" value="BglG_antiterminators"/>
</dbReference>
<dbReference type="InterPro" id="IPR013199">
    <property type="entry name" value="HTH_Mga_DNA-bd_dom"/>
</dbReference>
<dbReference type="InterPro" id="IPR007737">
    <property type="entry name" value="Mga_HTH"/>
</dbReference>
<dbReference type="InterPro" id="IPR013236">
    <property type="entry name" value="Mga_PRD_dom"/>
</dbReference>
<dbReference type="InterPro" id="IPR036388">
    <property type="entry name" value="WH-like_DNA-bd_sf"/>
</dbReference>
<dbReference type="PANTHER" id="PTHR30185">
    <property type="entry name" value="CRYPTIC BETA-GLUCOSIDE BGL OPERON ANTITERMINATOR"/>
    <property type="match status" value="1"/>
</dbReference>
<dbReference type="PANTHER" id="PTHR30185:SF18">
    <property type="entry name" value="TRANSCRIPTIONAL REGULATOR MTLR"/>
    <property type="match status" value="1"/>
</dbReference>
<dbReference type="Pfam" id="PF08280">
    <property type="entry name" value="HTH_Mga"/>
    <property type="match status" value="1"/>
</dbReference>
<dbReference type="Pfam" id="PF05043">
    <property type="entry name" value="Mga"/>
    <property type="match status" value="1"/>
</dbReference>
<dbReference type="Pfam" id="PF08270">
    <property type="entry name" value="PRD_Mga"/>
    <property type="match status" value="1"/>
</dbReference>
<proteinExistence type="evidence at protein level"/>
<accession>Q97P44</accession>
<feature type="chain" id="PRO_0000219549" description="Putative trans-acting regulator SP_1800">
    <location>
        <begin position="1"/>
        <end position="493"/>
    </location>
</feature>
<feature type="helix" evidence="2">
    <location>
        <begin position="2"/>
        <end position="4"/>
    </location>
</feature>
<feature type="helix" evidence="2">
    <location>
        <begin position="7"/>
        <end position="21"/>
    </location>
</feature>
<feature type="helix" evidence="2">
    <location>
        <begin position="28"/>
        <end position="34"/>
    </location>
</feature>
<feature type="helix" evidence="2">
    <location>
        <begin position="39"/>
        <end position="52"/>
    </location>
</feature>
<feature type="strand" evidence="2">
    <location>
        <begin position="58"/>
        <end position="60"/>
    </location>
</feature>
<feature type="strand" evidence="2">
    <location>
        <begin position="65"/>
        <end position="68"/>
    </location>
</feature>
<feature type="turn" evidence="2">
    <location>
        <begin position="70"/>
        <end position="72"/>
    </location>
</feature>
<feature type="helix" evidence="2">
    <location>
        <begin position="76"/>
        <end position="84"/>
    </location>
</feature>
<feature type="helix" evidence="2">
    <location>
        <begin position="87"/>
        <end position="97"/>
    </location>
</feature>
<feature type="helix" evidence="2">
    <location>
        <begin position="103"/>
        <end position="110"/>
    </location>
</feature>
<feature type="helix" evidence="2">
    <location>
        <begin position="114"/>
        <end position="129"/>
    </location>
</feature>
<feature type="strand" evidence="2">
    <location>
        <begin position="133"/>
        <end position="137"/>
    </location>
</feature>
<feature type="turn" evidence="2">
    <location>
        <begin position="138"/>
        <end position="141"/>
    </location>
</feature>
<feature type="strand" evidence="2">
    <location>
        <begin position="142"/>
        <end position="145"/>
    </location>
</feature>
<feature type="helix" evidence="2">
    <location>
        <begin position="147"/>
        <end position="161"/>
    </location>
</feature>
<feature type="strand" evidence="2">
    <location>
        <begin position="170"/>
        <end position="172"/>
    </location>
</feature>
<feature type="helix" evidence="2">
    <location>
        <begin position="175"/>
        <end position="186"/>
    </location>
</feature>
<feature type="helix" evidence="2">
    <location>
        <begin position="194"/>
        <end position="212"/>
    </location>
</feature>
<feature type="helix" evidence="2">
    <location>
        <begin position="232"/>
        <end position="234"/>
    </location>
</feature>
<feature type="helix" evidence="2">
    <location>
        <begin position="238"/>
        <end position="249"/>
    </location>
</feature>
<feature type="helix" evidence="2">
    <location>
        <begin position="255"/>
        <end position="261"/>
    </location>
</feature>
<feature type="helix" evidence="2">
    <location>
        <begin position="263"/>
        <end position="266"/>
    </location>
</feature>
<feature type="helix" evidence="2">
    <location>
        <begin position="274"/>
        <end position="283"/>
    </location>
</feature>
<feature type="helix" evidence="2">
    <location>
        <begin position="285"/>
        <end position="305"/>
    </location>
</feature>
<feature type="helix" evidence="2">
    <location>
        <begin position="312"/>
        <end position="324"/>
    </location>
</feature>
<feature type="strand" evidence="2">
    <location>
        <begin position="329"/>
        <end position="333"/>
    </location>
</feature>
<feature type="helix" evidence="2">
    <location>
        <begin position="339"/>
        <end position="350"/>
    </location>
</feature>
<feature type="helix" evidence="2">
    <location>
        <begin position="352"/>
        <end position="369"/>
    </location>
</feature>
<feature type="helix" evidence="2">
    <location>
        <begin position="375"/>
        <end position="387"/>
    </location>
</feature>
<feature type="helix" evidence="2">
    <location>
        <begin position="392"/>
        <end position="396"/>
    </location>
</feature>
<feature type="turn" evidence="2">
    <location>
        <begin position="397"/>
        <end position="399"/>
    </location>
</feature>
<feature type="strand" evidence="2">
    <location>
        <begin position="403"/>
        <end position="408"/>
    </location>
</feature>
<feature type="helix" evidence="2">
    <location>
        <begin position="413"/>
        <end position="426"/>
    </location>
</feature>
<feature type="strand" evidence="2">
    <location>
        <begin position="431"/>
        <end position="435"/>
    </location>
</feature>
<feature type="helix" evidence="2">
    <location>
        <begin position="443"/>
        <end position="447"/>
    </location>
</feature>
<feature type="strand" evidence="2">
    <location>
        <begin position="452"/>
        <end position="458"/>
    </location>
</feature>
<feature type="strand" evidence="2">
    <location>
        <begin position="467"/>
        <end position="470"/>
    </location>
</feature>
<feature type="helix" evidence="2">
    <location>
        <begin position="476"/>
        <end position="484"/>
    </location>
</feature>
<feature type="turn" evidence="2">
    <location>
        <begin position="485"/>
        <end position="489"/>
    </location>
</feature>
<feature type="helix" evidence="2">
    <location>
        <begin position="490"/>
        <end position="492"/>
    </location>
</feature>
<comment type="similarity">
    <text evidence="1">Belongs to the AtxA/AcpA family.</text>
</comment>
<evidence type="ECO:0000305" key="1"/>
<evidence type="ECO:0007829" key="2">
    <source>
        <dbReference type="PDB" id="5WAY"/>
    </source>
</evidence>
<protein>
    <recommendedName>
        <fullName>Putative trans-acting regulator SP_1800</fullName>
    </recommendedName>
</protein>
<organism>
    <name type="scientific">Streptococcus pneumoniae serotype 4 (strain ATCC BAA-334 / TIGR4)</name>
    <dbReference type="NCBI Taxonomy" id="170187"/>
    <lineage>
        <taxon>Bacteria</taxon>
        <taxon>Bacillati</taxon>
        <taxon>Bacillota</taxon>
        <taxon>Bacilli</taxon>
        <taxon>Lactobacillales</taxon>
        <taxon>Streptococcaceae</taxon>
        <taxon>Streptococcus</taxon>
    </lineage>
</organism>